<name>YBC5_SCHPO</name>
<sequence length="482" mass="55373">MQRDLTVDEFLNYLYINVKELFTLKEKSFHFWRNSLISCSKTKNFLFVVVGDEVLVYDLKEISSDASEPEPCFYLHCPHEASSSRQGDINQDMPNVINNVRCELIGDLEYFITANDCGKVAIYDVQKLNREPIIYDVQHSAWGLAVSPLRILGISSNSHNVNLFHLSPEFKRFKEDYHSPWFRQETLVLEGHEHNIPCITFNSSGTLLLSGSIDRSLQIWDITSLSCLCKFYTKLSIWGVKFIDKNAFYHISILKHKPGSLIPAQQFGQSPWKPPIMSSSAFLLSHEEDFDDDAVFEGEYYVHIQDELPKTKVKNYFRTYLRQKPEELFIFTTKFSIVLCAYMGNSQIFPLVSSKNCFEEPITPRFQALHRINMIECIPELQSVVCASQSGQLTLLRLICTTKILNGNPIYVYSFVPHKIRLTHLVDAPLLGMSVCPLYPGEENPFKRFKIMLTVYTGKVISVEVQLSENLYDTSHIGNIPL</sequence>
<feature type="chain" id="PRO_0000316547" description="Uncharacterized WD repeat-containing protein C27B12.05">
    <location>
        <begin position="1"/>
        <end position="482"/>
    </location>
</feature>
<feature type="repeat" description="WD 1">
    <location>
        <begin position="92"/>
        <end position="133"/>
    </location>
</feature>
<feature type="repeat" description="WD 2">
    <location>
        <begin position="191"/>
        <end position="230"/>
    </location>
</feature>
<keyword id="KW-0963">Cytoplasm</keyword>
<keyword id="KW-0539">Nucleus</keyword>
<keyword id="KW-1185">Reference proteome</keyword>
<keyword id="KW-0677">Repeat</keyword>
<keyword id="KW-0853">WD repeat</keyword>
<proteinExistence type="predicted"/>
<gene>
    <name type="ORF">pi073</name>
    <name type="ORF">SPBC27B12.05</name>
</gene>
<comment type="subcellular location">
    <subcellularLocation>
        <location evidence="1">Cytoplasm</location>
    </subcellularLocation>
    <subcellularLocation>
        <location evidence="1">Nucleus</location>
    </subcellularLocation>
</comment>
<comment type="sequence caution" evidence="2">
    <conflict type="erroneous gene model prediction">
        <sequence resource="EMBL-CDS" id="BAA21455"/>
    </conflict>
</comment>
<dbReference type="EMBL" id="AB004539">
    <property type="protein sequence ID" value="BAA21455.1"/>
    <property type="status" value="ALT_SEQ"/>
    <property type="molecule type" value="Genomic_DNA"/>
</dbReference>
<dbReference type="EMBL" id="CU329671">
    <property type="protein sequence ID" value="CAA16900.2"/>
    <property type="molecule type" value="Genomic_DNA"/>
</dbReference>
<dbReference type="PIR" id="T40029">
    <property type="entry name" value="T40029"/>
</dbReference>
<dbReference type="SMR" id="O42996"/>
<dbReference type="BioGRID" id="276911">
    <property type="interactions" value="12"/>
</dbReference>
<dbReference type="STRING" id="284812.O42996"/>
<dbReference type="PaxDb" id="4896-SPBC27B12.05.1"/>
<dbReference type="EnsemblFungi" id="SPBC27B12.05.1">
    <property type="protein sequence ID" value="SPBC27B12.05.1:pep"/>
    <property type="gene ID" value="SPBC27B12.05"/>
</dbReference>
<dbReference type="KEGG" id="spo:2540382"/>
<dbReference type="PomBase" id="SPBC27B12.05"/>
<dbReference type="VEuPathDB" id="FungiDB:SPBC27B12.05"/>
<dbReference type="eggNOG" id="ENOG502S8QA">
    <property type="taxonomic scope" value="Eukaryota"/>
</dbReference>
<dbReference type="HOGENOM" id="CLU_568773_0_0_1"/>
<dbReference type="InParanoid" id="O42996"/>
<dbReference type="OMA" id="EGEYYVH"/>
<dbReference type="PRO" id="PR:O42996"/>
<dbReference type="Proteomes" id="UP000002485">
    <property type="component" value="Chromosome II"/>
</dbReference>
<dbReference type="GO" id="GO:0005737">
    <property type="term" value="C:cytoplasm"/>
    <property type="evidence" value="ECO:0007005"/>
    <property type="project" value="PomBase"/>
</dbReference>
<dbReference type="GO" id="GO:0005829">
    <property type="term" value="C:cytosol"/>
    <property type="evidence" value="ECO:0007005"/>
    <property type="project" value="PomBase"/>
</dbReference>
<dbReference type="GO" id="GO:0005634">
    <property type="term" value="C:nucleus"/>
    <property type="evidence" value="ECO:0007005"/>
    <property type="project" value="PomBase"/>
</dbReference>
<dbReference type="GO" id="GO:0070651">
    <property type="term" value="P:nonfunctional rRNA decay"/>
    <property type="evidence" value="ECO:0000266"/>
    <property type="project" value="PomBase"/>
</dbReference>
<dbReference type="FunFam" id="2.130.10.10:FF:002661">
    <property type="entry name" value="Uncharacterized WD repeat-containing protein C27B12.05"/>
    <property type="match status" value="1"/>
</dbReference>
<dbReference type="Gene3D" id="2.130.10.10">
    <property type="entry name" value="YVTN repeat-like/Quinoprotein amine dehydrogenase"/>
    <property type="match status" value="1"/>
</dbReference>
<dbReference type="InterPro" id="IPR050844">
    <property type="entry name" value="Coatomer_complex_subunit"/>
</dbReference>
<dbReference type="InterPro" id="IPR014839">
    <property type="entry name" value="Crt10"/>
</dbReference>
<dbReference type="InterPro" id="IPR015943">
    <property type="entry name" value="WD40/YVTN_repeat-like_dom_sf"/>
</dbReference>
<dbReference type="InterPro" id="IPR019775">
    <property type="entry name" value="WD40_repeat_CS"/>
</dbReference>
<dbReference type="InterPro" id="IPR036322">
    <property type="entry name" value="WD40_repeat_dom_sf"/>
</dbReference>
<dbReference type="InterPro" id="IPR001680">
    <property type="entry name" value="WD40_rpt"/>
</dbReference>
<dbReference type="PANTHER" id="PTHR19876">
    <property type="entry name" value="COATOMER"/>
    <property type="match status" value="1"/>
</dbReference>
<dbReference type="PANTHER" id="PTHR19876:SF20">
    <property type="entry name" value="PRE-MRNA-SPLICING FACTOR PRP46-LIKE"/>
    <property type="match status" value="1"/>
</dbReference>
<dbReference type="Pfam" id="PF08728">
    <property type="entry name" value="CRT10"/>
    <property type="match status" value="1"/>
</dbReference>
<dbReference type="Pfam" id="PF00400">
    <property type="entry name" value="WD40"/>
    <property type="match status" value="1"/>
</dbReference>
<dbReference type="SMART" id="SM00320">
    <property type="entry name" value="WD40"/>
    <property type="match status" value="2"/>
</dbReference>
<dbReference type="SUPFAM" id="SSF50978">
    <property type="entry name" value="WD40 repeat-like"/>
    <property type="match status" value="1"/>
</dbReference>
<dbReference type="PROSITE" id="PS00678">
    <property type="entry name" value="WD_REPEATS_1"/>
    <property type="match status" value="1"/>
</dbReference>
<dbReference type="PROSITE" id="PS50082">
    <property type="entry name" value="WD_REPEATS_2"/>
    <property type="match status" value="1"/>
</dbReference>
<dbReference type="PROSITE" id="PS50294">
    <property type="entry name" value="WD_REPEATS_REGION"/>
    <property type="match status" value="1"/>
</dbReference>
<organism>
    <name type="scientific">Schizosaccharomyces pombe (strain 972 / ATCC 24843)</name>
    <name type="common">Fission yeast</name>
    <dbReference type="NCBI Taxonomy" id="284812"/>
    <lineage>
        <taxon>Eukaryota</taxon>
        <taxon>Fungi</taxon>
        <taxon>Dikarya</taxon>
        <taxon>Ascomycota</taxon>
        <taxon>Taphrinomycotina</taxon>
        <taxon>Schizosaccharomycetes</taxon>
        <taxon>Schizosaccharomycetales</taxon>
        <taxon>Schizosaccharomycetaceae</taxon>
        <taxon>Schizosaccharomyces</taxon>
    </lineage>
</organism>
<reference key="1">
    <citation type="journal article" date="2000" name="Yeast">
        <title>A 38 kb segment containing the cdc2 gene from the left arm of fission yeast chromosome II: sequence analysis and characterization of the genomic DNA and cDNAs encoded on the segment.</title>
        <authorList>
            <person name="Machida M."/>
            <person name="Yamazaki S."/>
            <person name="Kunihiro S."/>
            <person name="Tanaka T."/>
            <person name="Kushida N."/>
            <person name="Jinno K."/>
            <person name="Haikawa Y."/>
            <person name="Yamazaki J."/>
            <person name="Yamamoto S."/>
            <person name="Sekine M."/>
            <person name="Oguchi A."/>
            <person name="Nagai Y."/>
            <person name="Sakai M."/>
            <person name="Aoki K."/>
            <person name="Ogura K."/>
            <person name="Kudoh Y."/>
            <person name="Kikuchi H."/>
            <person name="Zhang M.Q."/>
            <person name="Yanagida M."/>
        </authorList>
    </citation>
    <scope>NUCLEOTIDE SEQUENCE [LARGE SCALE GENOMIC DNA]</scope>
    <source>
        <strain>972 / ATCC 24843</strain>
    </source>
</reference>
<reference key="2">
    <citation type="journal article" date="2002" name="Nature">
        <title>The genome sequence of Schizosaccharomyces pombe.</title>
        <authorList>
            <person name="Wood V."/>
            <person name="Gwilliam R."/>
            <person name="Rajandream M.A."/>
            <person name="Lyne M.H."/>
            <person name="Lyne R."/>
            <person name="Stewart A."/>
            <person name="Sgouros J.G."/>
            <person name="Peat N."/>
            <person name="Hayles J."/>
            <person name="Baker S.G."/>
            <person name="Basham D."/>
            <person name="Bowman S."/>
            <person name="Brooks K."/>
            <person name="Brown D."/>
            <person name="Brown S."/>
            <person name="Chillingworth T."/>
            <person name="Churcher C.M."/>
            <person name="Collins M."/>
            <person name="Connor R."/>
            <person name="Cronin A."/>
            <person name="Davis P."/>
            <person name="Feltwell T."/>
            <person name="Fraser A."/>
            <person name="Gentles S."/>
            <person name="Goble A."/>
            <person name="Hamlin N."/>
            <person name="Harris D.E."/>
            <person name="Hidalgo J."/>
            <person name="Hodgson G."/>
            <person name="Holroyd S."/>
            <person name="Hornsby T."/>
            <person name="Howarth S."/>
            <person name="Huckle E.J."/>
            <person name="Hunt S."/>
            <person name="Jagels K."/>
            <person name="James K.D."/>
            <person name="Jones L."/>
            <person name="Jones M."/>
            <person name="Leather S."/>
            <person name="McDonald S."/>
            <person name="McLean J."/>
            <person name="Mooney P."/>
            <person name="Moule S."/>
            <person name="Mungall K.L."/>
            <person name="Murphy L.D."/>
            <person name="Niblett D."/>
            <person name="Odell C."/>
            <person name="Oliver K."/>
            <person name="O'Neil S."/>
            <person name="Pearson D."/>
            <person name="Quail M.A."/>
            <person name="Rabbinowitsch E."/>
            <person name="Rutherford K.M."/>
            <person name="Rutter S."/>
            <person name="Saunders D."/>
            <person name="Seeger K."/>
            <person name="Sharp S."/>
            <person name="Skelton J."/>
            <person name="Simmonds M.N."/>
            <person name="Squares R."/>
            <person name="Squares S."/>
            <person name="Stevens K."/>
            <person name="Taylor K."/>
            <person name="Taylor R.G."/>
            <person name="Tivey A."/>
            <person name="Walsh S.V."/>
            <person name="Warren T."/>
            <person name="Whitehead S."/>
            <person name="Woodward J.R."/>
            <person name="Volckaert G."/>
            <person name="Aert R."/>
            <person name="Robben J."/>
            <person name="Grymonprez B."/>
            <person name="Weltjens I."/>
            <person name="Vanstreels E."/>
            <person name="Rieger M."/>
            <person name="Schaefer M."/>
            <person name="Mueller-Auer S."/>
            <person name="Gabel C."/>
            <person name="Fuchs M."/>
            <person name="Duesterhoeft A."/>
            <person name="Fritzc C."/>
            <person name="Holzer E."/>
            <person name="Moestl D."/>
            <person name="Hilbert H."/>
            <person name="Borzym K."/>
            <person name="Langer I."/>
            <person name="Beck A."/>
            <person name="Lehrach H."/>
            <person name="Reinhardt R."/>
            <person name="Pohl T.M."/>
            <person name="Eger P."/>
            <person name="Zimmermann W."/>
            <person name="Wedler H."/>
            <person name="Wambutt R."/>
            <person name="Purnelle B."/>
            <person name="Goffeau A."/>
            <person name="Cadieu E."/>
            <person name="Dreano S."/>
            <person name="Gloux S."/>
            <person name="Lelaure V."/>
            <person name="Mottier S."/>
            <person name="Galibert F."/>
            <person name="Aves S.J."/>
            <person name="Xiang Z."/>
            <person name="Hunt C."/>
            <person name="Moore K."/>
            <person name="Hurst S.M."/>
            <person name="Lucas M."/>
            <person name="Rochet M."/>
            <person name="Gaillardin C."/>
            <person name="Tallada V.A."/>
            <person name="Garzon A."/>
            <person name="Thode G."/>
            <person name="Daga R.R."/>
            <person name="Cruzado L."/>
            <person name="Jimenez J."/>
            <person name="Sanchez M."/>
            <person name="del Rey F."/>
            <person name="Benito J."/>
            <person name="Dominguez A."/>
            <person name="Revuelta J.L."/>
            <person name="Moreno S."/>
            <person name="Armstrong J."/>
            <person name="Forsburg S.L."/>
            <person name="Cerutti L."/>
            <person name="Lowe T."/>
            <person name="McCombie W.R."/>
            <person name="Paulsen I."/>
            <person name="Potashkin J."/>
            <person name="Shpakovski G.V."/>
            <person name="Ussery D."/>
            <person name="Barrell B.G."/>
            <person name="Nurse P."/>
        </authorList>
    </citation>
    <scope>NUCLEOTIDE SEQUENCE [LARGE SCALE GENOMIC DNA]</scope>
    <source>
        <strain>972 / ATCC 24843</strain>
    </source>
</reference>
<reference key="3">
    <citation type="journal article" date="2011" name="Science">
        <title>Comparative functional genomics of the fission yeasts.</title>
        <authorList>
            <person name="Rhind N."/>
            <person name="Chen Z."/>
            <person name="Yassour M."/>
            <person name="Thompson D.A."/>
            <person name="Haas B.J."/>
            <person name="Habib N."/>
            <person name="Wapinski I."/>
            <person name="Roy S."/>
            <person name="Lin M.F."/>
            <person name="Heiman D.I."/>
            <person name="Young S.K."/>
            <person name="Furuya K."/>
            <person name="Guo Y."/>
            <person name="Pidoux A."/>
            <person name="Chen H.M."/>
            <person name="Robbertse B."/>
            <person name="Goldberg J.M."/>
            <person name="Aoki K."/>
            <person name="Bayne E.H."/>
            <person name="Berlin A.M."/>
            <person name="Desjardins C.A."/>
            <person name="Dobbs E."/>
            <person name="Dukaj L."/>
            <person name="Fan L."/>
            <person name="FitzGerald M.G."/>
            <person name="French C."/>
            <person name="Gujja S."/>
            <person name="Hansen K."/>
            <person name="Keifenheim D."/>
            <person name="Levin J.Z."/>
            <person name="Mosher R.A."/>
            <person name="Mueller C.A."/>
            <person name="Pfiffner J."/>
            <person name="Priest M."/>
            <person name="Russ C."/>
            <person name="Smialowska A."/>
            <person name="Swoboda P."/>
            <person name="Sykes S.M."/>
            <person name="Vaughn M."/>
            <person name="Vengrova S."/>
            <person name="Yoder R."/>
            <person name="Zeng Q."/>
            <person name="Allshire R."/>
            <person name="Baulcombe D."/>
            <person name="Birren B.W."/>
            <person name="Brown W."/>
            <person name="Ekwall K."/>
            <person name="Kellis M."/>
            <person name="Leatherwood J."/>
            <person name="Levin H."/>
            <person name="Margalit H."/>
            <person name="Martienssen R."/>
            <person name="Nieduszynski C.A."/>
            <person name="Spatafora J.W."/>
            <person name="Friedman N."/>
            <person name="Dalgaard J.Z."/>
            <person name="Baumann P."/>
            <person name="Niki H."/>
            <person name="Regev A."/>
            <person name="Nusbaum C."/>
        </authorList>
    </citation>
    <scope>REVISION OF GENE MODEL</scope>
</reference>
<reference key="4">
    <citation type="journal article" date="2006" name="Nat. Biotechnol.">
        <title>ORFeome cloning and global analysis of protein localization in the fission yeast Schizosaccharomyces pombe.</title>
        <authorList>
            <person name="Matsuyama A."/>
            <person name="Arai R."/>
            <person name="Yashiroda Y."/>
            <person name="Shirai A."/>
            <person name="Kamata A."/>
            <person name="Sekido S."/>
            <person name="Kobayashi Y."/>
            <person name="Hashimoto A."/>
            <person name="Hamamoto M."/>
            <person name="Hiraoka Y."/>
            <person name="Horinouchi S."/>
            <person name="Yoshida M."/>
        </authorList>
    </citation>
    <scope>SUBCELLULAR LOCATION [LARGE SCALE ANALYSIS]</scope>
</reference>
<evidence type="ECO:0000269" key="1">
    <source>
    </source>
</evidence>
<evidence type="ECO:0000305" key="2"/>
<accession>O42996</accession>
<accession>O13664</accession>
<protein>
    <recommendedName>
        <fullName>Uncharacterized WD repeat-containing protein C27B12.05</fullName>
    </recommendedName>
</protein>